<proteinExistence type="predicted"/>
<organismHost>
    <name type="scientific">Acanthamoeba polyphaga</name>
    <name type="common">Amoeba</name>
    <dbReference type="NCBI Taxonomy" id="5757"/>
</organismHost>
<evidence type="ECO:0000255" key="1">
    <source>
        <dbReference type="PROSITE-ProRule" id="PRU00382"/>
    </source>
</evidence>
<gene>
    <name type="ordered locus">MIMI_R431</name>
</gene>
<accession>Q5UQM4</accession>
<protein>
    <recommendedName>
        <fullName>Putative 3'-5' exonuclease R431</fullName>
        <ecNumber>3.1.11.-</ecNumber>
    </recommendedName>
</protein>
<organism>
    <name type="scientific">Acanthamoeba polyphaga mimivirus</name>
    <name type="common">APMV</name>
    <dbReference type="NCBI Taxonomy" id="212035"/>
    <lineage>
        <taxon>Viruses</taxon>
        <taxon>Varidnaviria</taxon>
        <taxon>Bamfordvirae</taxon>
        <taxon>Nucleocytoviricota</taxon>
        <taxon>Megaviricetes</taxon>
        <taxon>Imitervirales</taxon>
        <taxon>Mimiviridae</taxon>
        <taxon>Megamimivirinae</taxon>
        <taxon>Mimivirus</taxon>
        <taxon>Mimivirus bradfordmassiliense</taxon>
    </lineage>
</organism>
<dbReference type="EC" id="3.1.11.-"/>
<dbReference type="EMBL" id="AY653733">
    <property type="protein sequence ID" value="AAV50700.1"/>
    <property type="molecule type" value="Genomic_DNA"/>
</dbReference>
<dbReference type="SMR" id="Q5UQM4"/>
<dbReference type="KEGG" id="vg:9925052"/>
<dbReference type="OrthoDB" id="16186at10239"/>
<dbReference type="Proteomes" id="UP000001134">
    <property type="component" value="Genome"/>
</dbReference>
<dbReference type="GO" id="GO:0008408">
    <property type="term" value="F:3'-5' exonuclease activity"/>
    <property type="evidence" value="ECO:0007669"/>
    <property type="project" value="InterPro"/>
</dbReference>
<dbReference type="GO" id="GO:0003676">
    <property type="term" value="F:nucleic acid binding"/>
    <property type="evidence" value="ECO:0007669"/>
    <property type="project" value="InterPro"/>
</dbReference>
<dbReference type="GO" id="GO:0006139">
    <property type="term" value="P:nucleobase-containing compound metabolic process"/>
    <property type="evidence" value="ECO:0007669"/>
    <property type="project" value="InterPro"/>
</dbReference>
<dbReference type="CDD" id="cd02325">
    <property type="entry name" value="R3H"/>
    <property type="match status" value="1"/>
</dbReference>
<dbReference type="CDD" id="cd06141">
    <property type="entry name" value="WRN_exo"/>
    <property type="match status" value="1"/>
</dbReference>
<dbReference type="Gene3D" id="3.30.1370.50">
    <property type="entry name" value="R3H-like domain"/>
    <property type="match status" value="1"/>
</dbReference>
<dbReference type="Gene3D" id="3.30.420.10">
    <property type="entry name" value="Ribonuclease H-like superfamily/Ribonuclease H"/>
    <property type="match status" value="1"/>
</dbReference>
<dbReference type="InterPro" id="IPR002562">
    <property type="entry name" value="3'-5'_exonuclease_dom"/>
</dbReference>
<dbReference type="InterPro" id="IPR051132">
    <property type="entry name" value="3-5_Exonuclease_domain"/>
</dbReference>
<dbReference type="InterPro" id="IPR001374">
    <property type="entry name" value="R3H_dom"/>
</dbReference>
<dbReference type="InterPro" id="IPR036867">
    <property type="entry name" value="R3H_dom_sf"/>
</dbReference>
<dbReference type="InterPro" id="IPR012337">
    <property type="entry name" value="RNaseH-like_sf"/>
</dbReference>
<dbReference type="InterPro" id="IPR036397">
    <property type="entry name" value="RNaseH_sf"/>
</dbReference>
<dbReference type="PANTHER" id="PTHR13620">
    <property type="entry name" value="3-5 EXONUCLEASE"/>
    <property type="match status" value="1"/>
</dbReference>
<dbReference type="PANTHER" id="PTHR13620:SF104">
    <property type="entry name" value="EXONUCLEASE 3'-5' DOMAIN-CONTAINING PROTEIN 2"/>
    <property type="match status" value="1"/>
</dbReference>
<dbReference type="Pfam" id="PF01612">
    <property type="entry name" value="DNA_pol_A_exo1"/>
    <property type="match status" value="1"/>
</dbReference>
<dbReference type="Pfam" id="PF01424">
    <property type="entry name" value="R3H"/>
    <property type="match status" value="1"/>
</dbReference>
<dbReference type="SMART" id="SM00474">
    <property type="entry name" value="35EXOc"/>
    <property type="match status" value="1"/>
</dbReference>
<dbReference type="SMART" id="SM00393">
    <property type="entry name" value="R3H"/>
    <property type="match status" value="1"/>
</dbReference>
<dbReference type="SUPFAM" id="SSF82708">
    <property type="entry name" value="R3H domain"/>
    <property type="match status" value="1"/>
</dbReference>
<dbReference type="SUPFAM" id="SSF53098">
    <property type="entry name" value="Ribonuclease H-like"/>
    <property type="match status" value="1"/>
</dbReference>
<dbReference type="PROSITE" id="PS51061">
    <property type="entry name" value="R3H"/>
    <property type="match status" value="1"/>
</dbReference>
<sequence>MEQEIISAVQDIIDFINTRGPTKVFVIDSHFKNNRSITPVWTKNDLSLVAFIKKFPEYFIIGTDLIVSHKNIPIDFQTIIQSWNLVEDDFALTEKIVGKKLTMFEFPNNLDIIVTSDFQIVDNWIENNIYDLKQEIIGLDTETLISGKSEKISIIQLSTSKHNIIIQVNQMNTLPQNLNKVFFDESIIKVGVAIDIDAKKLLQYFPTINQIKKTLDLSDLFKQTNFTKHISINPKESIGLKILAAHVLDLYIENKGDSEIKKSNWNNPVLTSDQVKYAITDSYLSLMIYNELQLMTNNLDVKNLLKNFCHIDESSVKKNSKNNLTRRELEQKEQERRLKSIESKIKKWLKEDDSLTFEFESMNAFYRRHVHTFVEKIPELSSETKGTDPNKYVIITRHC</sequence>
<reference key="1">
    <citation type="journal article" date="2004" name="Science">
        <title>The 1.2-megabase genome sequence of Mimivirus.</title>
        <authorList>
            <person name="Raoult D."/>
            <person name="Audic S."/>
            <person name="Robert C."/>
            <person name="Abergel C."/>
            <person name="Renesto P."/>
            <person name="Ogata H."/>
            <person name="La Scola B."/>
            <person name="Susan M."/>
            <person name="Claverie J.-M."/>
        </authorList>
    </citation>
    <scope>NUCLEOTIDE SEQUENCE [LARGE SCALE GENOMIC DNA]</scope>
    <source>
        <strain>Rowbotham-Bradford</strain>
    </source>
</reference>
<feature type="chain" id="PRO_0000249419" description="Putative 3'-5' exonuclease R431">
    <location>
        <begin position="1"/>
        <end position="399"/>
    </location>
</feature>
<feature type="domain" description="3'-5' exonuclease">
    <location>
        <begin position="118"/>
        <end position="297"/>
    </location>
</feature>
<feature type="domain" description="R3H" evidence="1">
    <location>
        <begin position="335"/>
        <end position="399"/>
    </location>
</feature>
<name>YR431_MIMIV</name>
<keyword id="KW-0269">Exonuclease</keyword>
<keyword id="KW-0378">Hydrolase</keyword>
<keyword id="KW-0540">Nuclease</keyword>
<keyword id="KW-1185">Reference proteome</keyword>